<dbReference type="EC" id="2.4.1.227" evidence="1"/>
<dbReference type="EMBL" id="CP000058">
    <property type="protein sequence ID" value="AAZ37434.1"/>
    <property type="molecule type" value="Genomic_DNA"/>
</dbReference>
<dbReference type="RefSeq" id="WP_011169426.1">
    <property type="nucleotide sequence ID" value="NC_005773.3"/>
</dbReference>
<dbReference type="SMR" id="Q48EF8"/>
<dbReference type="CAZy" id="GT28">
    <property type="family name" value="Glycosyltransferase Family 28"/>
</dbReference>
<dbReference type="KEGG" id="psp:PSPPH_4108"/>
<dbReference type="eggNOG" id="COG0707">
    <property type="taxonomic scope" value="Bacteria"/>
</dbReference>
<dbReference type="HOGENOM" id="CLU_037404_2_0_6"/>
<dbReference type="UniPathway" id="UPA00219"/>
<dbReference type="Proteomes" id="UP000000551">
    <property type="component" value="Chromosome"/>
</dbReference>
<dbReference type="GO" id="GO:0005886">
    <property type="term" value="C:plasma membrane"/>
    <property type="evidence" value="ECO:0007669"/>
    <property type="project" value="UniProtKB-SubCell"/>
</dbReference>
<dbReference type="GO" id="GO:0051991">
    <property type="term" value="F:UDP-N-acetyl-D-glucosamine:N-acetylmuramoyl-L-alanyl-D-glutamyl-meso-2,6-diaminopimelyl-D-alanyl-D-alanine-diphosphoundecaprenol 4-beta-N-acetylglucosaminlytransferase activity"/>
    <property type="evidence" value="ECO:0007669"/>
    <property type="project" value="RHEA"/>
</dbReference>
<dbReference type="GO" id="GO:0050511">
    <property type="term" value="F:undecaprenyldiphospho-muramoylpentapeptide beta-N-acetylglucosaminyltransferase activity"/>
    <property type="evidence" value="ECO:0007669"/>
    <property type="project" value="UniProtKB-UniRule"/>
</dbReference>
<dbReference type="GO" id="GO:0005975">
    <property type="term" value="P:carbohydrate metabolic process"/>
    <property type="evidence" value="ECO:0007669"/>
    <property type="project" value="InterPro"/>
</dbReference>
<dbReference type="GO" id="GO:0051301">
    <property type="term" value="P:cell division"/>
    <property type="evidence" value="ECO:0007669"/>
    <property type="project" value="UniProtKB-KW"/>
</dbReference>
<dbReference type="GO" id="GO:0071555">
    <property type="term" value="P:cell wall organization"/>
    <property type="evidence" value="ECO:0007669"/>
    <property type="project" value="UniProtKB-KW"/>
</dbReference>
<dbReference type="GO" id="GO:0030259">
    <property type="term" value="P:lipid glycosylation"/>
    <property type="evidence" value="ECO:0007669"/>
    <property type="project" value="UniProtKB-UniRule"/>
</dbReference>
<dbReference type="GO" id="GO:0009252">
    <property type="term" value="P:peptidoglycan biosynthetic process"/>
    <property type="evidence" value="ECO:0007669"/>
    <property type="project" value="UniProtKB-UniRule"/>
</dbReference>
<dbReference type="GO" id="GO:0008360">
    <property type="term" value="P:regulation of cell shape"/>
    <property type="evidence" value="ECO:0007669"/>
    <property type="project" value="UniProtKB-KW"/>
</dbReference>
<dbReference type="CDD" id="cd03785">
    <property type="entry name" value="GT28_MurG"/>
    <property type="match status" value="1"/>
</dbReference>
<dbReference type="Gene3D" id="3.40.50.2000">
    <property type="entry name" value="Glycogen Phosphorylase B"/>
    <property type="match status" value="2"/>
</dbReference>
<dbReference type="HAMAP" id="MF_00033">
    <property type="entry name" value="MurG"/>
    <property type="match status" value="1"/>
</dbReference>
<dbReference type="InterPro" id="IPR006009">
    <property type="entry name" value="GlcNAc_MurG"/>
</dbReference>
<dbReference type="InterPro" id="IPR007235">
    <property type="entry name" value="Glyco_trans_28_C"/>
</dbReference>
<dbReference type="InterPro" id="IPR004276">
    <property type="entry name" value="GlycoTrans_28_N"/>
</dbReference>
<dbReference type="NCBIfam" id="TIGR01133">
    <property type="entry name" value="murG"/>
    <property type="match status" value="1"/>
</dbReference>
<dbReference type="PANTHER" id="PTHR21015:SF22">
    <property type="entry name" value="GLYCOSYLTRANSFERASE"/>
    <property type="match status" value="1"/>
</dbReference>
<dbReference type="PANTHER" id="PTHR21015">
    <property type="entry name" value="UDP-N-ACETYLGLUCOSAMINE--N-ACETYLMURAMYL-(PENTAPEPTIDE) PYROPHOSPHORYL-UNDECAPRENOL N-ACETYLGLUCOSAMINE TRANSFERASE 1"/>
    <property type="match status" value="1"/>
</dbReference>
<dbReference type="Pfam" id="PF04101">
    <property type="entry name" value="Glyco_tran_28_C"/>
    <property type="match status" value="1"/>
</dbReference>
<dbReference type="Pfam" id="PF03033">
    <property type="entry name" value="Glyco_transf_28"/>
    <property type="match status" value="1"/>
</dbReference>
<dbReference type="SUPFAM" id="SSF53756">
    <property type="entry name" value="UDP-Glycosyltransferase/glycogen phosphorylase"/>
    <property type="match status" value="1"/>
</dbReference>
<accession>Q48EF8</accession>
<organism>
    <name type="scientific">Pseudomonas savastanoi pv. phaseolicola (strain 1448A / Race 6)</name>
    <name type="common">Pseudomonas syringae pv. phaseolicola (strain 1448A / Race 6)</name>
    <dbReference type="NCBI Taxonomy" id="264730"/>
    <lineage>
        <taxon>Bacteria</taxon>
        <taxon>Pseudomonadati</taxon>
        <taxon>Pseudomonadota</taxon>
        <taxon>Gammaproteobacteria</taxon>
        <taxon>Pseudomonadales</taxon>
        <taxon>Pseudomonadaceae</taxon>
        <taxon>Pseudomonas</taxon>
    </lineage>
</organism>
<feature type="chain" id="PRO_0000225084" description="UDP-N-acetylglucosamine--N-acetylmuramyl-(pentapeptide) pyrophosphoryl-undecaprenol N-acetylglucosamine transferase">
    <location>
        <begin position="1"/>
        <end position="356"/>
    </location>
</feature>
<feature type="binding site" evidence="1">
    <location>
        <begin position="12"/>
        <end position="14"/>
    </location>
    <ligand>
        <name>UDP-N-acetyl-alpha-D-glucosamine</name>
        <dbReference type="ChEBI" id="CHEBI:57705"/>
    </ligand>
</feature>
<feature type="binding site" evidence="1">
    <location>
        <position position="124"/>
    </location>
    <ligand>
        <name>UDP-N-acetyl-alpha-D-glucosamine</name>
        <dbReference type="ChEBI" id="CHEBI:57705"/>
    </ligand>
</feature>
<feature type="binding site" evidence="1">
    <location>
        <position position="163"/>
    </location>
    <ligand>
        <name>UDP-N-acetyl-alpha-D-glucosamine</name>
        <dbReference type="ChEBI" id="CHEBI:57705"/>
    </ligand>
</feature>
<feature type="binding site" evidence="1">
    <location>
        <position position="188"/>
    </location>
    <ligand>
        <name>UDP-N-acetyl-alpha-D-glucosamine</name>
        <dbReference type="ChEBI" id="CHEBI:57705"/>
    </ligand>
</feature>
<feature type="binding site" evidence="1">
    <location>
        <position position="242"/>
    </location>
    <ligand>
        <name>UDP-N-acetyl-alpha-D-glucosamine</name>
        <dbReference type="ChEBI" id="CHEBI:57705"/>
    </ligand>
</feature>
<feature type="binding site" evidence="1">
    <location>
        <position position="287"/>
    </location>
    <ligand>
        <name>UDP-N-acetyl-alpha-D-glucosamine</name>
        <dbReference type="ChEBI" id="CHEBI:57705"/>
    </ligand>
</feature>
<reference key="1">
    <citation type="journal article" date="2005" name="J. Bacteriol.">
        <title>Whole-genome sequence analysis of Pseudomonas syringae pv. phaseolicola 1448A reveals divergence among pathovars in genes involved in virulence and transposition.</title>
        <authorList>
            <person name="Joardar V."/>
            <person name="Lindeberg M."/>
            <person name="Jackson R.W."/>
            <person name="Selengut J."/>
            <person name="Dodson R."/>
            <person name="Brinkac L.M."/>
            <person name="Daugherty S.C."/>
            <person name="DeBoy R.T."/>
            <person name="Durkin A.S."/>
            <person name="Gwinn Giglio M."/>
            <person name="Madupu R."/>
            <person name="Nelson W.C."/>
            <person name="Rosovitz M.J."/>
            <person name="Sullivan S.A."/>
            <person name="Crabtree J."/>
            <person name="Creasy T."/>
            <person name="Davidsen T.M."/>
            <person name="Haft D.H."/>
            <person name="Zafar N."/>
            <person name="Zhou L."/>
            <person name="Halpin R."/>
            <person name="Holley T."/>
            <person name="Khouri H.M."/>
            <person name="Feldblyum T.V."/>
            <person name="White O."/>
            <person name="Fraser C.M."/>
            <person name="Chatterjee A.K."/>
            <person name="Cartinhour S."/>
            <person name="Schneider D."/>
            <person name="Mansfield J.W."/>
            <person name="Collmer A."/>
            <person name="Buell R."/>
        </authorList>
    </citation>
    <scope>NUCLEOTIDE SEQUENCE [LARGE SCALE GENOMIC DNA]</scope>
    <source>
        <strain>1448A / Race 6</strain>
    </source>
</reference>
<comment type="function">
    <text evidence="1">Cell wall formation. Catalyzes the transfer of a GlcNAc subunit on undecaprenyl-pyrophosphoryl-MurNAc-pentapeptide (lipid intermediate I) to form undecaprenyl-pyrophosphoryl-MurNAc-(pentapeptide)GlcNAc (lipid intermediate II).</text>
</comment>
<comment type="catalytic activity">
    <reaction evidence="1">
        <text>di-trans,octa-cis-undecaprenyl diphospho-N-acetyl-alpha-D-muramoyl-L-alanyl-D-glutamyl-meso-2,6-diaminopimeloyl-D-alanyl-D-alanine + UDP-N-acetyl-alpha-D-glucosamine = di-trans,octa-cis-undecaprenyl diphospho-[N-acetyl-alpha-D-glucosaminyl-(1-&gt;4)]-N-acetyl-alpha-D-muramoyl-L-alanyl-D-glutamyl-meso-2,6-diaminopimeloyl-D-alanyl-D-alanine + UDP + H(+)</text>
        <dbReference type="Rhea" id="RHEA:31227"/>
        <dbReference type="ChEBI" id="CHEBI:15378"/>
        <dbReference type="ChEBI" id="CHEBI:57705"/>
        <dbReference type="ChEBI" id="CHEBI:58223"/>
        <dbReference type="ChEBI" id="CHEBI:61387"/>
        <dbReference type="ChEBI" id="CHEBI:61388"/>
        <dbReference type="EC" id="2.4.1.227"/>
    </reaction>
</comment>
<comment type="pathway">
    <text evidence="1">Cell wall biogenesis; peptidoglycan biosynthesis.</text>
</comment>
<comment type="subcellular location">
    <subcellularLocation>
        <location evidence="1">Cell inner membrane</location>
        <topology evidence="1">Peripheral membrane protein</topology>
        <orientation evidence="1">Cytoplasmic side</orientation>
    </subcellularLocation>
</comment>
<comment type="similarity">
    <text evidence="1">Belongs to the glycosyltransferase 28 family. MurG subfamily.</text>
</comment>
<protein>
    <recommendedName>
        <fullName evidence="1">UDP-N-acetylglucosamine--N-acetylmuramyl-(pentapeptide) pyrophosphoryl-undecaprenol N-acetylglucosamine transferase</fullName>
        <ecNumber evidence="1">2.4.1.227</ecNumber>
    </recommendedName>
    <alternativeName>
        <fullName evidence="1">Undecaprenyl-PP-MurNAc-pentapeptide-UDPGlcNAc GlcNAc transferase</fullName>
    </alternativeName>
</protein>
<keyword id="KW-0131">Cell cycle</keyword>
<keyword id="KW-0132">Cell division</keyword>
<keyword id="KW-0997">Cell inner membrane</keyword>
<keyword id="KW-1003">Cell membrane</keyword>
<keyword id="KW-0133">Cell shape</keyword>
<keyword id="KW-0961">Cell wall biogenesis/degradation</keyword>
<keyword id="KW-0328">Glycosyltransferase</keyword>
<keyword id="KW-0472">Membrane</keyword>
<keyword id="KW-0573">Peptidoglycan synthesis</keyword>
<keyword id="KW-0808">Transferase</keyword>
<sequence>MDANVLIMAGGTGGHVFPALACAREFQARGYKVHWLGTPRGIENELVPQAGLTLHLINVTGLRGKGRLSLLKAPFMLLKALMQARKVVRQVKPVCVVGFGGYVTGPGGLAAKLAGVPLIIHEQNAVAGTANRSLASFASRVCEAFPNTFAASSKRRTTGNPVRVELFLETPRQALTGRKARLLVLGGSLGAEPLNKLLPEALARLPQDIQPEVFHQSGKNHDAVTAERYRNVGVEAQVAPFIQNMAQAYSWADLVVCRAGALTISELAAAGLPSLLIPLPHAIDDHQSRNADYLAREGAAFVMPQATTGAAEMAARLKEVLMQPEQLNSMARTARSLAKPDATNTVVNVCVEVAHG</sequence>
<name>MURG_PSE14</name>
<proteinExistence type="inferred from homology"/>
<evidence type="ECO:0000255" key="1">
    <source>
        <dbReference type="HAMAP-Rule" id="MF_00033"/>
    </source>
</evidence>
<gene>
    <name evidence="1" type="primary">murG</name>
    <name type="ordered locus">PSPPH_4108</name>
</gene>